<accession>B6I152</accession>
<comment type="function">
    <text evidence="1">Together with LptD, is involved in the assembly of lipopolysaccharide (LPS) at the surface of the outer membrane. Required for the proper assembly of LptD. Binds LPS and may serve as the LPS recognition site at the outer membrane.</text>
</comment>
<comment type="subunit">
    <text evidence="1">Component of the lipopolysaccharide transport and assembly complex. Interacts with LptD.</text>
</comment>
<comment type="subcellular location">
    <subcellularLocation>
        <location evidence="1">Cell outer membrane</location>
        <topology evidence="1">Lipid-anchor</topology>
    </subcellularLocation>
</comment>
<comment type="similarity">
    <text evidence="1">Belongs to the LptE lipoprotein family.</text>
</comment>
<feature type="signal peptide" evidence="1">
    <location>
        <begin position="1"/>
        <end position="18"/>
    </location>
</feature>
<feature type="chain" id="PRO_1000138271" description="LPS-assembly lipoprotein LptE">
    <location>
        <begin position="19"/>
        <end position="193"/>
    </location>
</feature>
<feature type="region of interest" description="Disordered" evidence="2">
    <location>
        <begin position="166"/>
        <end position="193"/>
    </location>
</feature>
<feature type="compositionally biased region" description="Low complexity" evidence="2">
    <location>
        <begin position="174"/>
        <end position="186"/>
    </location>
</feature>
<feature type="lipid moiety-binding region" description="N-palmitoyl cysteine" evidence="1">
    <location>
        <position position="19"/>
    </location>
</feature>
<feature type="lipid moiety-binding region" description="S-diacylglycerol cysteine" evidence="1">
    <location>
        <position position="19"/>
    </location>
</feature>
<gene>
    <name evidence="1" type="primary">lptE</name>
    <name type="synonym">rlpB</name>
    <name type="ordered locus">ECSE_0710</name>
</gene>
<keyword id="KW-0998">Cell outer membrane</keyword>
<keyword id="KW-0449">Lipoprotein</keyword>
<keyword id="KW-0472">Membrane</keyword>
<keyword id="KW-0564">Palmitate</keyword>
<keyword id="KW-0732">Signal</keyword>
<reference key="1">
    <citation type="journal article" date="2008" name="DNA Res.">
        <title>Complete genome sequence and comparative analysis of the wild-type commensal Escherichia coli strain SE11 isolated from a healthy adult.</title>
        <authorList>
            <person name="Oshima K."/>
            <person name="Toh H."/>
            <person name="Ogura Y."/>
            <person name="Sasamoto H."/>
            <person name="Morita H."/>
            <person name="Park S.-H."/>
            <person name="Ooka T."/>
            <person name="Iyoda S."/>
            <person name="Taylor T.D."/>
            <person name="Hayashi T."/>
            <person name="Itoh K."/>
            <person name="Hattori M."/>
        </authorList>
    </citation>
    <scope>NUCLEOTIDE SEQUENCE [LARGE SCALE GENOMIC DNA]</scope>
    <source>
        <strain>SE11</strain>
    </source>
</reference>
<name>LPTE_ECOSE</name>
<organism>
    <name type="scientific">Escherichia coli (strain SE11)</name>
    <dbReference type="NCBI Taxonomy" id="409438"/>
    <lineage>
        <taxon>Bacteria</taxon>
        <taxon>Pseudomonadati</taxon>
        <taxon>Pseudomonadota</taxon>
        <taxon>Gammaproteobacteria</taxon>
        <taxon>Enterobacterales</taxon>
        <taxon>Enterobacteriaceae</taxon>
        <taxon>Escherichia</taxon>
    </lineage>
</organism>
<evidence type="ECO:0000255" key="1">
    <source>
        <dbReference type="HAMAP-Rule" id="MF_01186"/>
    </source>
</evidence>
<evidence type="ECO:0000256" key="2">
    <source>
        <dbReference type="SAM" id="MobiDB-lite"/>
    </source>
</evidence>
<protein>
    <recommendedName>
        <fullName evidence="1">LPS-assembly lipoprotein LptE</fullName>
    </recommendedName>
</protein>
<sequence length="193" mass="21357">MRYLATLLLSLAVLITAGCGWHLRDTTQVPSTMKVMILDSGDPNGPLSRAVRNQLRLNGVELLDKETTRKDVPSLRLGKVSIAKDTASVFRNGQTAEYQMIMTVNATVLIPGRDIYPISAKVFRSFFDNPQMALAKDNEQDMIVKEMYDRAAEQLIRKLPSIRAADIRSDEEQTSTTTDTPATPARVSTTLGN</sequence>
<proteinExistence type="inferred from homology"/>
<dbReference type="EMBL" id="AP009240">
    <property type="protein sequence ID" value="BAG76234.1"/>
    <property type="molecule type" value="Genomic_DNA"/>
</dbReference>
<dbReference type="RefSeq" id="WP_001269673.1">
    <property type="nucleotide sequence ID" value="NC_011415.1"/>
</dbReference>
<dbReference type="SMR" id="B6I152"/>
<dbReference type="GeneID" id="93776841"/>
<dbReference type="KEGG" id="ecy:ECSE_0710"/>
<dbReference type="HOGENOM" id="CLU_103309_1_1_6"/>
<dbReference type="Proteomes" id="UP000008199">
    <property type="component" value="Chromosome"/>
</dbReference>
<dbReference type="GO" id="GO:0009279">
    <property type="term" value="C:cell outer membrane"/>
    <property type="evidence" value="ECO:0007669"/>
    <property type="project" value="UniProtKB-SubCell"/>
</dbReference>
<dbReference type="GO" id="GO:1990351">
    <property type="term" value="C:transporter complex"/>
    <property type="evidence" value="ECO:0007669"/>
    <property type="project" value="TreeGrafter"/>
</dbReference>
<dbReference type="GO" id="GO:0001530">
    <property type="term" value="F:lipopolysaccharide binding"/>
    <property type="evidence" value="ECO:0007669"/>
    <property type="project" value="TreeGrafter"/>
</dbReference>
<dbReference type="GO" id="GO:0043165">
    <property type="term" value="P:Gram-negative-bacterium-type cell outer membrane assembly"/>
    <property type="evidence" value="ECO:0007669"/>
    <property type="project" value="UniProtKB-UniRule"/>
</dbReference>
<dbReference type="GO" id="GO:0015920">
    <property type="term" value="P:lipopolysaccharide transport"/>
    <property type="evidence" value="ECO:0007669"/>
    <property type="project" value="TreeGrafter"/>
</dbReference>
<dbReference type="FunFam" id="3.30.160.150:FF:000001">
    <property type="entry name" value="LPS-assembly lipoprotein LptE"/>
    <property type="match status" value="1"/>
</dbReference>
<dbReference type="Gene3D" id="3.30.160.150">
    <property type="entry name" value="Lipoprotein like domain"/>
    <property type="match status" value="1"/>
</dbReference>
<dbReference type="HAMAP" id="MF_01186">
    <property type="entry name" value="LPS_assembly_LptE"/>
    <property type="match status" value="1"/>
</dbReference>
<dbReference type="InterPro" id="IPR007485">
    <property type="entry name" value="LPS_assembly_LptE"/>
</dbReference>
<dbReference type="NCBIfam" id="NF008062">
    <property type="entry name" value="PRK10796.1"/>
    <property type="match status" value="1"/>
</dbReference>
<dbReference type="PANTHER" id="PTHR38098">
    <property type="entry name" value="LPS-ASSEMBLY LIPOPROTEIN LPTE"/>
    <property type="match status" value="1"/>
</dbReference>
<dbReference type="PANTHER" id="PTHR38098:SF1">
    <property type="entry name" value="LPS-ASSEMBLY LIPOPROTEIN LPTE"/>
    <property type="match status" value="1"/>
</dbReference>
<dbReference type="Pfam" id="PF04390">
    <property type="entry name" value="LptE"/>
    <property type="match status" value="1"/>
</dbReference>
<dbReference type="PROSITE" id="PS51257">
    <property type="entry name" value="PROKAR_LIPOPROTEIN"/>
    <property type="match status" value="1"/>
</dbReference>